<evidence type="ECO:0000250" key="1"/>
<evidence type="ECO:0000256" key="2">
    <source>
        <dbReference type="SAM" id="MobiDB-lite"/>
    </source>
</evidence>
<evidence type="ECO:0000269" key="3">
    <source>
    </source>
</evidence>
<evidence type="ECO:0000305" key="4"/>
<keyword id="KW-0072">Autophagy</keyword>
<keyword id="KW-0963">Cytoplasm</keyword>
<keyword id="KW-1017">Isopeptide bond</keyword>
<keyword id="KW-0472">Membrane</keyword>
<keyword id="KW-0653">Protein transport</keyword>
<keyword id="KW-1185">Reference proteome</keyword>
<keyword id="KW-0813">Transport</keyword>
<keyword id="KW-0832">Ubl conjugation</keyword>
<accession>Q54GT9</accession>
<accession>Q86CS1</accession>
<protein>
    <recommendedName>
        <fullName>Autophagy protein 5</fullName>
    </recommendedName>
</protein>
<gene>
    <name type="primary">atg5</name>
    <name type="synonym">apg5</name>
    <name type="ORF">DDB_G0289881</name>
</gene>
<reference key="1">
    <citation type="journal article" date="2003" name="J. Biol. Chem.">
        <title>Macroautophagy is required for multicellular development of the social amoeba Dictyostelium discoideum.</title>
        <authorList>
            <person name="Otto G.P."/>
            <person name="Wu M.Y."/>
            <person name="Kazgan N."/>
            <person name="Anderson O.R."/>
            <person name="Kessin R.H."/>
        </authorList>
    </citation>
    <scope>NUCLEOTIDE SEQUENCE [GENOMIC DNA]</scope>
    <scope>FUNCTION</scope>
    <source>
        <strain>AX3 / DH1</strain>
    </source>
</reference>
<reference key="2">
    <citation type="journal article" date="2005" name="Nature">
        <title>The genome of the social amoeba Dictyostelium discoideum.</title>
        <authorList>
            <person name="Eichinger L."/>
            <person name="Pachebat J.A."/>
            <person name="Gloeckner G."/>
            <person name="Rajandream M.A."/>
            <person name="Sucgang R."/>
            <person name="Berriman M."/>
            <person name="Song J."/>
            <person name="Olsen R."/>
            <person name="Szafranski K."/>
            <person name="Xu Q."/>
            <person name="Tunggal B."/>
            <person name="Kummerfeld S."/>
            <person name="Madera M."/>
            <person name="Konfortov B.A."/>
            <person name="Rivero F."/>
            <person name="Bankier A.T."/>
            <person name="Lehmann R."/>
            <person name="Hamlin N."/>
            <person name="Davies R."/>
            <person name="Gaudet P."/>
            <person name="Fey P."/>
            <person name="Pilcher K."/>
            <person name="Chen G."/>
            <person name="Saunders D."/>
            <person name="Sodergren E.J."/>
            <person name="Davis P."/>
            <person name="Kerhornou A."/>
            <person name="Nie X."/>
            <person name="Hall N."/>
            <person name="Anjard C."/>
            <person name="Hemphill L."/>
            <person name="Bason N."/>
            <person name="Farbrother P."/>
            <person name="Desany B."/>
            <person name="Just E."/>
            <person name="Morio T."/>
            <person name="Rost R."/>
            <person name="Churcher C.M."/>
            <person name="Cooper J."/>
            <person name="Haydock S."/>
            <person name="van Driessche N."/>
            <person name="Cronin A."/>
            <person name="Goodhead I."/>
            <person name="Muzny D.M."/>
            <person name="Mourier T."/>
            <person name="Pain A."/>
            <person name="Lu M."/>
            <person name="Harper D."/>
            <person name="Lindsay R."/>
            <person name="Hauser H."/>
            <person name="James K.D."/>
            <person name="Quiles M."/>
            <person name="Madan Babu M."/>
            <person name="Saito T."/>
            <person name="Buchrieser C."/>
            <person name="Wardroper A."/>
            <person name="Felder M."/>
            <person name="Thangavelu M."/>
            <person name="Johnson D."/>
            <person name="Knights A."/>
            <person name="Loulseged H."/>
            <person name="Mungall K.L."/>
            <person name="Oliver K."/>
            <person name="Price C."/>
            <person name="Quail M.A."/>
            <person name="Urushihara H."/>
            <person name="Hernandez J."/>
            <person name="Rabbinowitsch E."/>
            <person name="Steffen D."/>
            <person name="Sanders M."/>
            <person name="Ma J."/>
            <person name="Kohara Y."/>
            <person name="Sharp S."/>
            <person name="Simmonds M.N."/>
            <person name="Spiegler S."/>
            <person name="Tivey A."/>
            <person name="Sugano S."/>
            <person name="White B."/>
            <person name="Walker D."/>
            <person name="Woodward J.R."/>
            <person name="Winckler T."/>
            <person name="Tanaka Y."/>
            <person name="Shaulsky G."/>
            <person name="Schleicher M."/>
            <person name="Weinstock G.M."/>
            <person name="Rosenthal A."/>
            <person name="Cox E.C."/>
            <person name="Chisholm R.L."/>
            <person name="Gibbs R.A."/>
            <person name="Loomis W.F."/>
            <person name="Platzer M."/>
            <person name="Kay R.R."/>
            <person name="Williams J.G."/>
            <person name="Dear P.H."/>
            <person name="Noegel A.A."/>
            <person name="Barrell B.G."/>
            <person name="Kuspa A."/>
        </authorList>
    </citation>
    <scope>NUCLEOTIDE SEQUENCE [LARGE SCALE GENOMIC DNA]</scope>
    <source>
        <strain>AX4</strain>
    </source>
</reference>
<comment type="function">
    <text evidence="1 3">Involved in autophagic vesicle formation. Conjugation with atg12, through a ubiquitin-like conjugating system involving atg7 as an E1-like activating enzyme and atg10 as an E2-like conjugating enzyme, is essential for its function. The atg12-atg5 conjugate acts as an E3-like enzyme which is required for lipidation of atg8 and its association to the vesicle membranes (By similarity).</text>
</comment>
<comment type="subcellular location">
    <subcellularLocation>
        <location evidence="1">Cytoplasm</location>
    </subcellularLocation>
    <subcellularLocation>
        <location evidence="1">Preautophagosomal structure membrane</location>
        <topology evidence="1">Peripheral membrane protein</topology>
    </subcellularLocation>
</comment>
<comment type="PTM">
    <text evidence="1">Conjugated to atg12; which is essential for autophagy.</text>
</comment>
<comment type="similarity">
    <text evidence="4">Belongs to the ATG5 family.</text>
</comment>
<sequence length="398" mass="46061">MSSFDEDIKRSIWEGKIPIVFTLSPDDLTSHLSPSPYTLMAPRNSYFPLITSLVKDYFSSSTLVLLDEMWLEYRGIPLKWHLPIGVLYDTIVGNNNCNNSNNNNNNNNNNNNNNNNNNNNNNNNNNNNNNNNNNNNNNNNNNNNNNNIIMEQPYWNIVVHFQSYPDRILLRCPNIESVRTYYKNVLKEANFIKQGDITKINNLNINQSNDLWDGLKSHDYDKFWSVNKKLIPNSNKEYKNIPIRLIINYKPPIQELIPVFDENLVELTLENLFSRIPYESFSNFLNYNNNNNNNNINNNSPPLSPNSNNNNNNNNVDNSIENSLNQTNVESAEPEFSNLLQYIKATNAEYKIQGIQPSLKSSAVWLYEHFGHPDNFLYIVLIDPSQNNNNNNNNSNNY</sequence>
<organism>
    <name type="scientific">Dictyostelium discoideum</name>
    <name type="common">Social amoeba</name>
    <dbReference type="NCBI Taxonomy" id="44689"/>
    <lineage>
        <taxon>Eukaryota</taxon>
        <taxon>Amoebozoa</taxon>
        <taxon>Evosea</taxon>
        <taxon>Eumycetozoa</taxon>
        <taxon>Dictyostelia</taxon>
        <taxon>Dictyosteliales</taxon>
        <taxon>Dictyosteliaceae</taxon>
        <taxon>Dictyostelium</taxon>
    </lineage>
</organism>
<proteinExistence type="inferred from homology"/>
<feature type="chain" id="PRO_0000327428" description="Autophagy protein 5">
    <location>
        <begin position="1"/>
        <end position="398"/>
    </location>
</feature>
<feature type="region of interest" description="Disordered" evidence="2">
    <location>
        <begin position="99"/>
        <end position="147"/>
    </location>
</feature>
<feature type="region of interest" description="Disordered" evidence="2">
    <location>
        <begin position="292"/>
        <end position="321"/>
    </location>
</feature>
<feature type="cross-link" description="Glycyl lysine isopeptide (Lys-Gly) (interchain with G-Cter in ATG12)" evidence="1">
    <location>
        <position position="187"/>
    </location>
</feature>
<feature type="sequence conflict" description="In Ref. 1; AAO39075." evidence="4" ref="1">
    <original>Y</original>
    <variation>H</variation>
    <location>
        <position position="88"/>
    </location>
</feature>
<feature type="sequence conflict" description="In Ref. 1; AAO39075." evidence="4" ref="1">
    <location>
        <position position="147"/>
    </location>
</feature>
<name>ATG5_DICDI</name>
<dbReference type="EMBL" id="AY191012">
    <property type="protein sequence ID" value="AAO39075.1"/>
    <property type="molecule type" value="Genomic_DNA"/>
</dbReference>
<dbReference type="EMBL" id="AAFI02000149">
    <property type="protein sequence ID" value="EAL62453.1"/>
    <property type="molecule type" value="Genomic_DNA"/>
</dbReference>
<dbReference type="RefSeq" id="XP_635980.1">
    <property type="nucleotide sequence ID" value="XM_630888.1"/>
</dbReference>
<dbReference type="SMR" id="Q54GT9"/>
<dbReference type="FunCoup" id="Q54GT9">
    <property type="interactions" value="321"/>
</dbReference>
<dbReference type="STRING" id="44689.Q54GT9"/>
<dbReference type="PaxDb" id="44689-DDB0191390"/>
<dbReference type="EnsemblProtists" id="EAL62453">
    <property type="protein sequence ID" value="EAL62453"/>
    <property type="gene ID" value="DDB_G0289881"/>
</dbReference>
<dbReference type="GeneID" id="8627395"/>
<dbReference type="KEGG" id="ddi:DDB_G0289881"/>
<dbReference type="dictyBase" id="DDB_G0289881">
    <property type="gene designation" value="atg5"/>
</dbReference>
<dbReference type="VEuPathDB" id="AmoebaDB:DDB_G0289881"/>
<dbReference type="eggNOG" id="KOG2976">
    <property type="taxonomic scope" value="Eukaryota"/>
</dbReference>
<dbReference type="HOGENOM" id="CLU_051894_0_0_1"/>
<dbReference type="InParanoid" id="Q54GT9"/>
<dbReference type="OMA" id="DYDKFWS"/>
<dbReference type="PhylomeDB" id="Q54GT9"/>
<dbReference type="Reactome" id="R-DDI-1632852">
    <property type="pathway name" value="Macroautophagy"/>
</dbReference>
<dbReference type="Reactome" id="R-DDI-5205685">
    <property type="pathway name" value="PINK1-PRKN Mediated Mitophagy"/>
</dbReference>
<dbReference type="Reactome" id="R-DDI-8934903">
    <property type="pathway name" value="Receptor Mediated Mitophagy"/>
</dbReference>
<dbReference type="PRO" id="PR:Q54GT9"/>
<dbReference type="Proteomes" id="UP000002195">
    <property type="component" value="Chromosome 5"/>
</dbReference>
<dbReference type="GO" id="GO:0034274">
    <property type="term" value="C:Atg12-Atg5-Atg16 complex"/>
    <property type="evidence" value="ECO:0000314"/>
    <property type="project" value="dictyBase"/>
</dbReference>
<dbReference type="GO" id="GO:0005776">
    <property type="term" value="C:autophagosome"/>
    <property type="evidence" value="ECO:0000318"/>
    <property type="project" value="GO_Central"/>
</dbReference>
<dbReference type="GO" id="GO:0005737">
    <property type="term" value="C:cytoplasm"/>
    <property type="evidence" value="ECO:0000314"/>
    <property type="project" value="dictyBase"/>
</dbReference>
<dbReference type="GO" id="GO:0061908">
    <property type="term" value="C:phagophore"/>
    <property type="evidence" value="ECO:0000318"/>
    <property type="project" value="GO_Central"/>
</dbReference>
<dbReference type="GO" id="GO:0034045">
    <property type="term" value="C:phagophore assembly site membrane"/>
    <property type="evidence" value="ECO:0000318"/>
    <property type="project" value="GO_Central"/>
</dbReference>
<dbReference type="GO" id="GO:0035973">
    <property type="term" value="P:aggrephagy"/>
    <property type="evidence" value="ECO:0000318"/>
    <property type="project" value="GO_Central"/>
</dbReference>
<dbReference type="GO" id="GO:0000045">
    <property type="term" value="P:autophagosome assembly"/>
    <property type="evidence" value="ECO:0000318"/>
    <property type="project" value="GO_Central"/>
</dbReference>
<dbReference type="GO" id="GO:0006995">
    <property type="term" value="P:cellular response to nitrogen starvation"/>
    <property type="evidence" value="ECO:0000315"/>
    <property type="project" value="dictyBase"/>
</dbReference>
<dbReference type="GO" id="GO:0042742">
    <property type="term" value="P:defense response to bacterium"/>
    <property type="evidence" value="ECO:0000314"/>
    <property type="project" value="dictyBase"/>
</dbReference>
<dbReference type="GO" id="GO:0016236">
    <property type="term" value="P:macroautophagy"/>
    <property type="evidence" value="ECO:0000315"/>
    <property type="project" value="dictyBase"/>
</dbReference>
<dbReference type="GO" id="GO:0000423">
    <property type="term" value="P:mitophagy"/>
    <property type="evidence" value="ECO:0000318"/>
    <property type="project" value="GO_Central"/>
</dbReference>
<dbReference type="GO" id="GO:0006909">
    <property type="term" value="P:phagocytosis"/>
    <property type="evidence" value="ECO:0000315"/>
    <property type="project" value="dictyBase"/>
</dbReference>
<dbReference type="GO" id="GO:0034727">
    <property type="term" value="P:piecemeal microautophagy of the nucleus"/>
    <property type="evidence" value="ECO:0000318"/>
    <property type="project" value="GO_Central"/>
</dbReference>
<dbReference type="GO" id="GO:0006907">
    <property type="term" value="P:pinocytosis"/>
    <property type="evidence" value="ECO:0000315"/>
    <property type="project" value="dictyBase"/>
</dbReference>
<dbReference type="GO" id="GO:0043161">
    <property type="term" value="P:proteasome-mediated ubiquitin-dependent protein catabolic process"/>
    <property type="evidence" value="ECO:0000315"/>
    <property type="project" value="dictyBase"/>
</dbReference>
<dbReference type="GO" id="GO:0071692">
    <property type="term" value="P:protein localization to extracellular region"/>
    <property type="evidence" value="ECO:0000315"/>
    <property type="project" value="dictyBase"/>
</dbReference>
<dbReference type="GO" id="GO:0015031">
    <property type="term" value="P:protein transport"/>
    <property type="evidence" value="ECO:0007669"/>
    <property type="project" value="UniProtKB-KW"/>
</dbReference>
<dbReference type="GO" id="GO:0010468">
    <property type="term" value="P:regulation of gene expression"/>
    <property type="evidence" value="ECO:0000315"/>
    <property type="project" value="dictyBase"/>
</dbReference>
<dbReference type="GO" id="GO:0009617">
    <property type="term" value="P:response to bacterium"/>
    <property type="evidence" value="ECO:0007007"/>
    <property type="project" value="dictyBase"/>
</dbReference>
<dbReference type="GO" id="GO:0030587">
    <property type="term" value="P:sorocarp development"/>
    <property type="evidence" value="ECO:0000315"/>
    <property type="project" value="dictyBase"/>
</dbReference>
<dbReference type="GO" id="GO:0031288">
    <property type="term" value="P:sorocarp morphogenesis"/>
    <property type="evidence" value="ECO:0000315"/>
    <property type="project" value="dictyBase"/>
</dbReference>
<dbReference type="GO" id="GO:0048837">
    <property type="term" value="P:sorocarp sorus development"/>
    <property type="evidence" value="ECO:0000315"/>
    <property type="project" value="dictyBase"/>
</dbReference>
<dbReference type="GO" id="GO:0030435">
    <property type="term" value="P:sporulation resulting in formation of a cellular spore"/>
    <property type="evidence" value="ECO:0000315"/>
    <property type="project" value="dictyBase"/>
</dbReference>
<dbReference type="Gene3D" id="3.10.20.620">
    <property type="match status" value="1"/>
</dbReference>
<dbReference type="Gene3D" id="1.10.246.190">
    <property type="entry name" value="Autophagy protein Apg5, helix rich domain"/>
    <property type="match status" value="1"/>
</dbReference>
<dbReference type="Gene3D" id="3.10.20.90">
    <property type="entry name" value="Phosphatidylinositol 3-kinase Catalytic Subunit, Chain A, domain 1"/>
    <property type="match status" value="1"/>
</dbReference>
<dbReference type="InterPro" id="IPR007239">
    <property type="entry name" value="Atg5"/>
</dbReference>
<dbReference type="InterPro" id="IPR048940">
    <property type="entry name" value="ATG5_HBR"/>
</dbReference>
<dbReference type="InterPro" id="IPR042526">
    <property type="entry name" value="Atg5_HR"/>
</dbReference>
<dbReference type="InterPro" id="IPR048939">
    <property type="entry name" value="ATG5_UblA"/>
</dbReference>
<dbReference type="InterPro" id="IPR042527">
    <property type="entry name" value="Atg5_UblA_dom_sf"/>
</dbReference>
<dbReference type="InterPro" id="IPR048318">
    <property type="entry name" value="ATG5_UblB"/>
</dbReference>
<dbReference type="PANTHER" id="PTHR13040">
    <property type="entry name" value="AUTOPHAGY PROTEIN 5"/>
    <property type="match status" value="1"/>
</dbReference>
<dbReference type="PANTHER" id="PTHR13040:SF2">
    <property type="entry name" value="AUTOPHAGY PROTEIN 5"/>
    <property type="match status" value="1"/>
</dbReference>
<dbReference type="Pfam" id="PF20637">
    <property type="entry name" value="ATG5_HBR"/>
    <property type="match status" value="1"/>
</dbReference>
<dbReference type="Pfam" id="PF20638">
    <property type="entry name" value="ATG5_UblA"/>
    <property type="match status" value="1"/>
</dbReference>
<dbReference type="Pfam" id="PF04106">
    <property type="entry name" value="ATG5_UblB"/>
    <property type="match status" value="1"/>
</dbReference>